<accession>Q9NQS5</accession>
<accession>B6V9G7</accession>
<comment type="function">
    <text evidence="1 7 9">G protein-coupled receptor that responds endogenously to dietary fatty acids or nutrient, specifically medium-chain free fatty acid (FFA) with carbon chain lengths of C9 to C14. Capric acid (C10:0), undecanoic acid (C11:0) and lauric acid (C12:0) are the most potent agonists (PubMed:16966319). In immune cells, functions as a pro-inflammatory receptor via 6-OAU and promotes the expression of pro-inflammatory mediators such as TNFalpha, IL-6 and IL-12B as well as stimulating chemotactic responses through activation of signaling mediators AKT, ERK and NF-kappa-B (By similarity). In addition, triggers increased bacterial adhesion and phagocytosis in macrophages and regulates pro-inflammatory function via enhancing NLRP3 inflammasome activation (By similarity). Also plays an important role in inflammation by modulating neutrophil functions (By similarity). Mechanistically, promotes neutrophil chemotaxis, reactive oxygen species (ROS) production and degranulation via LYN-AKT/ERK pathway (By similarity). To regulate ROS, communicates with the two formyl peptide receptors FPR2 and FPR1 to control the NADPH oxidase activity in neutrophils (PubMed:33789297).</text>
</comment>
<comment type="subunit">
    <text evidence="10">Interacts with ARRB2 and ARR3.</text>
</comment>
<comment type="interaction">
    <interactant intactId="EBI-21892697">
        <id>Q9NQS5</id>
    </interactant>
    <interactant intactId="EBI-20794243">
        <id>Q6ZMG9</id>
        <label>CERS6</label>
    </interactant>
    <organismsDiffer>false</organismsDiffer>
    <experiments>2</experiments>
</comment>
<comment type="subcellular location">
    <subcellularLocation>
        <location evidence="10">Cell membrane</location>
        <topology>Multi-pass membrane protein</topology>
    </subcellularLocation>
</comment>
<comment type="tissue specificity">
    <text evidence="5 6 7">Expressed predominantly in hematopoietic tissues. High levels detected in the bone marrow and lower levels in the peripheral leukocytes and lung. Also expressed in brain, heart, muscle, colon, thymus, spleen, kidney, liver, placenta and intestine. Within the leukocyte population expression is higher in neutrophils and eosinophils relative to T- or B-lymphocytes.</text>
</comment>
<comment type="induction">
    <text evidence="7">By bacterial lipopolysaccharides (LPS) in the monocytic leukemia cell line THP-1.</text>
</comment>
<comment type="PTM">
    <text evidence="10">Phosphorylated by a subset of GPR84-activating ligands. Constitutively phosphorylated at Ser-221 and Ser-224 in the absence of 2-HTP. By contrast, Thr-263 and Thr-264 are phosphorylated only following prior cell treatment with 2-HTP.</text>
</comment>
<comment type="similarity">
    <text evidence="3">Belongs to the G-protein coupled receptor 1 family.</text>
</comment>
<evidence type="ECO:0000250" key="1">
    <source>
        <dbReference type="UniProtKB" id="Q8CIM5"/>
    </source>
</evidence>
<evidence type="ECO:0000255" key="2"/>
<evidence type="ECO:0000255" key="3">
    <source>
        <dbReference type="PROSITE-ProRule" id="PRU00521"/>
    </source>
</evidence>
<evidence type="ECO:0000256" key="4">
    <source>
        <dbReference type="SAM" id="MobiDB-lite"/>
    </source>
</evidence>
<evidence type="ECO:0000269" key="5">
    <source>
    </source>
</evidence>
<evidence type="ECO:0000269" key="6">
    <source>
    </source>
</evidence>
<evidence type="ECO:0000269" key="7">
    <source>
    </source>
</evidence>
<evidence type="ECO:0000269" key="8">
    <source>
    </source>
</evidence>
<evidence type="ECO:0000269" key="9">
    <source>
    </source>
</evidence>
<evidence type="ECO:0000269" key="10">
    <source>
    </source>
</evidence>
<evidence type="ECO:0007829" key="11">
    <source>
        <dbReference type="PDB" id="8J18"/>
    </source>
</evidence>
<evidence type="ECO:0007829" key="12">
    <source>
        <dbReference type="PDB" id="8J19"/>
    </source>
</evidence>
<evidence type="ECO:0007829" key="13">
    <source>
        <dbReference type="PDB" id="8J1A"/>
    </source>
</evidence>
<feature type="chain" id="PRO_0000069589" description="G-protein coupled receptor 84">
    <location>
        <begin position="1"/>
        <end position="396"/>
    </location>
</feature>
<feature type="topological domain" description="Extracellular" evidence="2">
    <location>
        <begin position="1"/>
        <end position="26"/>
    </location>
</feature>
<feature type="transmembrane region" description="Helical; Name=1" evidence="2">
    <location>
        <begin position="27"/>
        <end position="47"/>
    </location>
</feature>
<feature type="topological domain" description="Cytoplasmic" evidence="2">
    <location>
        <begin position="48"/>
        <end position="57"/>
    </location>
</feature>
<feature type="transmembrane region" description="Helical; Name=2" evidence="2">
    <location>
        <begin position="58"/>
        <end position="78"/>
    </location>
</feature>
<feature type="topological domain" description="Extracellular" evidence="2">
    <location>
        <begin position="79"/>
        <end position="94"/>
    </location>
</feature>
<feature type="transmembrane region" description="Helical; Name=3" evidence="2">
    <location>
        <begin position="95"/>
        <end position="115"/>
    </location>
</feature>
<feature type="topological domain" description="Cytoplasmic" evidence="2">
    <location>
        <begin position="116"/>
        <end position="144"/>
    </location>
</feature>
<feature type="transmembrane region" description="Helical; Name=4" evidence="2">
    <location>
        <begin position="145"/>
        <end position="165"/>
    </location>
</feature>
<feature type="topological domain" description="Extracellular" evidence="2">
    <location>
        <begin position="166"/>
        <end position="180"/>
    </location>
</feature>
<feature type="transmembrane region" description="Helical; Name=5" evidence="2">
    <location>
        <begin position="181"/>
        <end position="201"/>
    </location>
</feature>
<feature type="topological domain" description="Cytoplasmic" evidence="2">
    <location>
        <begin position="202"/>
        <end position="320"/>
    </location>
</feature>
<feature type="transmembrane region" description="Helical; Name=6" evidence="2">
    <location>
        <begin position="321"/>
        <end position="341"/>
    </location>
</feature>
<feature type="topological domain" description="Extracellular" evidence="2">
    <location>
        <begin position="342"/>
        <end position="352"/>
    </location>
</feature>
<feature type="transmembrane region" description="Helical; Name=7" evidence="2">
    <location>
        <begin position="353"/>
        <end position="373"/>
    </location>
</feature>
<feature type="topological domain" description="Cytoplasmic" evidence="2">
    <location>
        <begin position="374"/>
        <end position="396"/>
    </location>
</feature>
<feature type="region of interest" description="Disordered" evidence="4">
    <location>
        <begin position="244"/>
        <end position="311"/>
    </location>
</feature>
<feature type="compositionally biased region" description="Low complexity" evidence="4">
    <location>
        <begin position="247"/>
        <end position="260"/>
    </location>
</feature>
<feature type="modified residue" description="Phosphoserine" evidence="10">
    <location>
        <position position="221"/>
    </location>
</feature>
<feature type="modified residue" description="Phosphoserine" evidence="10">
    <location>
        <position position="224"/>
    </location>
</feature>
<feature type="modified residue" description="Phosphothreonine" evidence="10">
    <location>
        <position position="263"/>
    </location>
</feature>
<feature type="modified residue" description="Phosphothreonine" evidence="10">
    <location>
        <position position="264"/>
    </location>
</feature>
<feature type="glycosylation site" description="N-linked (GlcNAc...) asparagine" evidence="2">
    <location>
        <position position="3"/>
    </location>
</feature>
<feature type="glycosylation site" description="N-linked (GlcNAc...) asparagine" evidence="2">
    <location>
        <position position="8"/>
    </location>
</feature>
<feature type="sequence variant" id="VAR_049397" description="In dbSNP:rs11170883.">
    <original>G</original>
    <variation>D</variation>
    <location>
        <position position="37"/>
    </location>
</feature>
<feature type="sequence variant" id="VAR_069393" evidence="8">
    <original>P</original>
    <variation>R</variation>
    <location>
        <position position="367"/>
    </location>
</feature>
<feature type="mutagenesis site" description="More than 50% loss of interaction with ARR3." evidence="10">
    <original>T</original>
    <variation>A</variation>
    <location>
        <position position="263"/>
    </location>
</feature>
<feature type="mutagenesis site" description="More than 50% loss of interaction with ARR3." evidence="10">
    <original>T</original>
    <variation>A</variation>
    <location>
        <position position="264"/>
    </location>
</feature>
<feature type="helix" evidence="12">
    <location>
        <begin position="15"/>
        <end position="18"/>
    </location>
</feature>
<feature type="helix" evidence="11">
    <location>
        <begin position="20"/>
        <end position="47"/>
    </location>
</feature>
<feature type="helix" evidence="11">
    <location>
        <begin position="49"/>
        <end position="51"/>
    </location>
</feature>
<feature type="helix" evidence="11">
    <location>
        <begin position="56"/>
        <end position="71"/>
    </location>
</feature>
<feature type="turn" evidence="11">
    <location>
        <begin position="72"/>
        <end position="74"/>
    </location>
</feature>
<feature type="helix" evidence="11">
    <location>
        <begin position="75"/>
        <end position="78"/>
    </location>
</feature>
<feature type="turn" evidence="11">
    <location>
        <begin position="79"/>
        <end position="81"/>
    </location>
</feature>
<feature type="strand" evidence="11">
    <location>
        <begin position="82"/>
        <end position="85"/>
    </location>
</feature>
<feature type="helix" evidence="11">
    <location>
        <begin position="91"/>
        <end position="123"/>
    </location>
</feature>
<feature type="turn" evidence="11">
    <location>
        <begin position="125"/>
        <end position="127"/>
    </location>
</feature>
<feature type="helix" evidence="11">
    <location>
        <begin position="128"/>
        <end position="131"/>
    </location>
</feature>
<feature type="helix" evidence="11">
    <location>
        <begin position="134"/>
        <end position="152"/>
    </location>
</feature>
<feature type="helix" evidence="11">
    <location>
        <begin position="156"/>
        <end position="158"/>
    </location>
</feature>
<feature type="strand" evidence="11">
    <location>
        <begin position="159"/>
        <end position="161"/>
    </location>
</feature>
<feature type="turn" evidence="11">
    <location>
        <begin position="163"/>
        <end position="165"/>
    </location>
</feature>
<feature type="strand" evidence="11">
    <location>
        <begin position="166"/>
        <end position="170"/>
    </location>
</feature>
<feature type="turn" evidence="11">
    <location>
        <begin position="172"/>
        <end position="174"/>
    </location>
</feature>
<feature type="helix" evidence="11">
    <location>
        <begin position="176"/>
        <end position="212"/>
    </location>
</feature>
<feature type="helix" evidence="11">
    <location>
        <begin position="213"/>
        <end position="215"/>
    </location>
</feature>
<feature type="helix" evidence="11">
    <location>
        <begin position="316"/>
        <end position="341"/>
    </location>
</feature>
<feature type="strand" evidence="11">
    <location>
        <begin position="343"/>
        <end position="345"/>
    </location>
</feature>
<feature type="helix" evidence="13">
    <location>
        <begin position="348"/>
        <end position="350"/>
    </location>
</feature>
<feature type="helix" evidence="11">
    <location>
        <begin position="351"/>
        <end position="369"/>
    </location>
</feature>
<feature type="turn" evidence="11">
    <location>
        <begin position="370"/>
        <end position="372"/>
    </location>
</feature>
<feature type="helix" evidence="11">
    <location>
        <begin position="375"/>
        <end position="387"/>
    </location>
</feature>
<feature type="helix" evidence="11">
    <location>
        <begin position="390"/>
        <end position="393"/>
    </location>
</feature>
<reference key="1">
    <citation type="journal article" date="2001" name="J. Leukoc. Biol.">
        <title>Cloning and expression analysis of a novel G-protein-coupled receptor selectively expressed on granulocytes.</title>
        <authorList>
            <person name="Yousefi S."/>
            <person name="Cooper P.R."/>
            <person name="Potter S.L."/>
            <person name="Mueck B."/>
            <person name="Jarai G."/>
        </authorList>
    </citation>
    <scope>NUCLEOTIDE SEQUENCE [MRNA]</scope>
    <scope>TISSUE SPECIFICITY</scope>
</reference>
<reference key="2">
    <citation type="journal article" date="2001" name="J. Mol. Biol.">
        <title>An expressed sequence tag (EST) data mining strategy succeeding in the discovery of new G-protein coupled receptors.</title>
        <authorList>
            <person name="Wittenberger T."/>
            <person name="Schaller H.C."/>
            <person name="Hellebrand S."/>
        </authorList>
    </citation>
    <scope>NUCLEOTIDE SEQUENCE [MRNA]</scope>
    <scope>TISSUE SPECIFICITY</scope>
</reference>
<reference key="3">
    <citation type="submission" date="2008-10" db="EMBL/GenBank/DDBJ databases">
        <title>Isolation of cDNA coding for Homo sapiens G protein-coupled receptor 84 (GPR84).</title>
        <authorList>
            <person name="Kaighin V.A."/>
            <person name="Martin A.L."/>
            <person name="Aronstam R.S."/>
        </authorList>
    </citation>
    <scope>NUCLEOTIDE SEQUENCE [MRNA]</scope>
    <source>
        <tissue>Heart</tissue>
    </source>
</reference>
<reference key="4">
    <citation type="journal article" date="2002" name="FEBS Lett.">
        <title>Identification of G protein-coupled receptor genes from the human genome sequence.</title>
        <authorList>
            <person name="Takeda S."/>
            <person name="Kadowaki S."/>
            <person name="Haga T."/>
            <person name="Takaesu H."/>
            <person name="Mitaku S."/>
        </authorList>
    </citation>
    <scope>NUCLEOTIDE SEQUENCE [LARGE SCALE GENOMIC DNA]</scope>
</reference>
<reference key="5">
    <citation type="submission" date="2005-07" db="EMBL/GenBank/DDBJ databases">
        <authorList>
            <person name="Mural R.J."/>
            <person name="Istrail S."/>
            <person name="Sutton G.G."/>
            <person name="Florea L."/>
            <person name="Halpern A.L."/>
            <person name="Mobarry C.M."/>
            <person name="Lippert R."/>
            <person name="Walenz B."/>
            <person name="Shatkay H."/>
            <person name="Dew I."/>
            <person name="Miller J.R."/>
            <person name="Flanigan M.J."/>
            <person name="Edwards N.J."/>
            <person name="Bolanos R."/>
            <person name="Fasulo D."/>
            <person name="Halldorsson B.V."/>
            <person name="Hannenhalli S."/>
            <person name="Turner R."/>
            <person name="Yooseph S."/>
            <person name="Lu F."/>
            <person name="Nusskern D.R."/>
            <person name="Shue B.C."/>
            <person name="Zheng X.H."/>
            <person name="Zhong F."/>
            <person name="Delcher A.L."/>
            <person name="Huson D.H."/>
            <person name="Kravitz S.A."/>
            <person name="Mouchard L."/>
            <person name="Reinert K."/>
            <person name="Remington K.A."/>
            <person name="Clark A.G."/>
            <person name="Waterman M.S."/>
            <person name="Eichler E.E."/>
            <person name="Adams M.D."/>
            <person name="Hunkapiller M.W."/>
            <person name="Myers E.W."/>
            <person name="Venter J.C."/>
        </authorList>
    </citation>
    <scope>NUCLEOTIDE SEQUENCE [LARGE SCALE GENOMIC DNA]</scope>
</reference>
<reference key="6">
    <citation type="journal article" date="2004" name="Genome Res.">
        <title>The status, quality, and expansion of the NIH full-length cDNA project: the Mammalian Gene Collection (MGC).</title>
        <authorList>
            <consortium name="The MGC Project Team"/>
        </authorList>
    </citation>
    <scope>NUCLEOTIDE SEQUENCE [LARGE SCALE MRNA]</scope>
    <source>
        <tissue>Brain</tissue>
    </source>
</reference>
<reference key="7">
    <citation type="journal article" date="2006" name="J. Biol. Chem.">
        <title>Medium-chain fatty acids as ligands for orphan G protein-coupled receptor GPR84.</title>
        <authorList>
            <person name="Wang J."/>
            <person name="Wu X."/>
            <person name="Simonavicius N."/>
            <person name="Tian H."/>
            <person name="Ling L."/>
        </authorList>
    </citation>
    <scope>FUNCTION</scope>
    <scope>INDUCTION</scope>
    <scope>TISSUE SPECIFICITY</scope>
</reference>
<reference key="8">
    <citation type="journal article" date="2012" name="N. Engl. J. Med.">
        <title>Diagnostic exome sequencing in persons with severe intellectual disability.</title>
        <authorList>
            <person name="de Ligt J."/>
            <person name="Willemsen M.H."/>
            <person name="van Bon B.W."/>
            <person name="Kleefstra T."/>
            <person name="Yntema H.G."/>
            <person name="Kroes T."/>
            <person name="Vulto-van Silfhout A.T."/>
            <person name="Koolen D.A."/>
            <person name="de Vries P."/>
            <person name="Gilissen C."/>
            <person name="del Rosario M."/>
            <person name="Hoischen A."/>
            <person name="Scheffer H."/>
            <person name="de Vries B.B."/>
            <person name="Brunner H.G."/>
            <person name="Veltman J.A."/>
            <person name="Vissers L.E."/>
        </authorList>
    </citation>
    <scope>VARIANT ARG-367</scope>
</reference>
<reference key="9">
    <citation type="journal article" date="2021" name="J. Innate Immun.">
        <title>The Two Formyl Peptide Receptors Differently Regulate GPR84-Mediated Neutrophil NADPH Oxidase Activity.</title>
        <authorList>
            <person name="Maartensson J."/>
            <person name="Sundqvist M."/>
            <person name="Manandhar A."/>
            <person name="Ieremias L."/>
            <person name="Zhang L."/>
            <person name="Ulven T."/>
            <person name="Xie X."/>
            <person name="Bjoerkman L."/>
            <person name="Forsman H."/>
        </authorList>
    </citation>
    <scope>FUNCTION</scope>
</reference>
<reference key="10">
    <citation type="journal article" date="2022" name="J. Biol. Chem.">
        <title>Selective phosphorylation of threonine residues defines GPR84-arrestin interactions of biased ligands.</title>
        <authorList>
            <person name="Marsango S."/>
            <person name="Ward R.J."/>
            <person name="Jenkins L."/>
            <person name="Butcher A.J."/>
            <person name="Al Mahmud Z."/>
            <person name="Dwomoh L."/>
            <person name="Nagel F."/>
            <person name="Schulz S."/>
            <person name="Tikhonova I.G."/>
            <person name="Tobin A.B."/>
            <person name="Milligan G."/>
        </authorList>
    </citation>
    <scope>FUNCTION</scope>
    <scope>PHOSPHORYLATION AT SER-221; SER-224; THR-263 AND THR-264</scope>
    <scope>INTERACTION WITH ARRB2 AND ARR3</scope>
    <scope>SUBCELLULAR LOCATION</scope>
    <scope>MUTAGENESIS OF THR-263 AND THR-264</scope>
</reference>
<dbReference type="EMBL" id="AF282693">
    <property type="protein sequence ID" value="AAF91467.1"/>
    <property type="molecule type" value="mRNA"/>
</dbReference>
<dbReference type="EMBL" id="AF237762">
    <property type="protein sequence ID" value="AAK01857.1"/>
    <property type="molecule type" value="mRNA"/>
</dbReference>
<dbReference type="EMBL" id="FJ348261">
    <property type="protein sequence ID" value="ACI96305.1"/>
    <property type="molecule type" value="mRNA"/>
</dbReference>
<dbReference type="EMBL" id="AB083586">
    <property type="protein sequence ID" value="BAB89299.1"/>
    <property type="molecule type" value="Genomic_DNA"/>
</dbReference>
<dbReference type="EMBL" id="CH471054">
    <property type="protein sequence ID" value="EAW96776.1"/>
    <property type="molecule type" value="Genomic_DNA"/>
</dbReference>
<dbReference type="EMBL" id="BC020614">
    <property type="protein sequence ID" value="AAH20614.1"/>
    <property type="molecule type" value="mRNA"/>
</dbReference>
<dbReference type="CCDS" id="CCDS8878.1"/>
<dbReference type="RefSeq" id="NP_065103.1">
    <property type="nucleotide sequence ID" value="NM_020370.3"/>
</dbReference>
<dbReference type="RefSeq" id="XP_011536797.1">
    <property type="nucleotide sequence ID" value="XM_011538495.3"/>
</dbReference>
<dbReference type="RefSeq" id="XP_054228283.1">
    <property type="nucleotide sequence ID" value="XM_054372308.1"/>
</dbReference>
<dbReference type="PDB" id="8G05">
    <property type="method" value="EM"/>
    <property type="resolution" value="3.00 A"/>
    <property type="chains" value="R=1-387"/>
</dbReference>
<dbReference type="PDB" id="8J18">
    <property type="method" value="EM"/>
    <property type="resolution" value="2.89 A"/>
    <property type="chains" value="R=1-396"/>
</dbReference>
<dbReference type="PDB" id="8J19">
    <property type="method" value="EM"/>
    <property type="resolution" value="3.23 A"/>
    <property type="chains" value="R=1-396"/>
</dbReference>
<dbReference type="PDB" id="8J1A">
    <property type="method" value="EM"/>
    <property type="resolution" value="3.24 A"/>
    <property type="chains" value="R=1-396"/>
</dbReference>
<dbReference type="PDBsum" id="8G05"/>
<dbReference type="PDBsum" id="8J18"/>
<dbReference type="PDBsum" id="8J19"/>
<dbReference type="PDBsum" id="8J1A"/>
<dbReference type="EMDB" id="EMD-29645"/>
<dbReference type="EMDB" id="EMD-35913"/>
<dbReference type="EMDB" id="EMD-35914"/>
<dbReference type="EMDB" id="EMD-35915"/>
<dbReference type="SMR" id="Q9NQS5"/>
<dbReference type="BioGRID" id="119803">
    <property type="interactions" value="30"/>
</dbReference>
<dbReference type="FunCoup" id="Q9NQS5">
    <property type="interactions" value="237"/>
</dbReference>
<dbReference type="IntAct" id="Q9NQS5">
    <property type="interactions" value="23"/>
</dbReference>
<dbReference type="STRING" id="9606.ENSP00000450310"/>
<dbReference type="BindingDB" id="Q9NQS5"/>
<dbReference type="ChEMBL" id="CHEMBL3714079"/>
<dbReference type="DrugBank" id="DB15447">
    <property type="generic name" value="Setogepram"/>
</dbReference>
<dbReference type="DrugBank" id="DB16857">
    <property type="generic name" value="Undecanoic acid"/>
</dbReference>
<dbReference type="DrugCentral" id="Q9NQS5"/>
<dbReference type="GuidetoPHARMACOLOGY" id="120"/>
<dbReference type="GlyCosmos" id="Q9NQS5">
    <property type="glycosylation" value="2 sites, No reported glycans"/>
</dbReference>
<dbReference type="GlyGen" id="Q9NQS5">
    <property type="glycosylation" value="3 sites, 1 O-linked glycan (1 site)"/>
</dbReference>
<dbReference type="iPTMnet" id="Q9NQS5"/>
<dbReference type="PhosphoSitePlus" id="Q9NQS5"/>
<dbReference type="BioMuta" id="GPR84"/>
<dbReference type="DMDM" id="66774035"/>
<dbReference type="jPOST" id="Q9NQS5"/>
<dbReference type="MassIVE" id="Q9NQS5"/>
<dbReference type="PaxDb" id="9606-ENSP00000450310"/>
<dbReference type="PeptideAtlas" id="Q9NQS5"/>
<dbReference type="ProteomicsDB" id="82180"/>
<dbReference type="Antibodypedia" id="15347">
    <property type="antibodies" value="302 antibodies from 29 providers"/>
</dbReference>
<dbReference type="DNASU" id="53831"/>
<dbReference type="Ensembl" id="ENST00000267015.4">
    <property type="protein sequence ID" value="ENSP00000267015.3"/>
    <property type="gene ID" value="ENSG00000139572.4"/>
</dbReference>
<dbReference type="Ensembl" id="ENST00000551809.1">
    <property type="protein sequence ID" value="ENSP00000450310.1"/>
    <property type="gene ID" value="ENSG00000139572.4"/>
</dbReference>
<dbReference type="GeneID" id="53831"/>
<dbReference type="KEGG" id="hsa:53831"/>
<dbReference type="MANE-Select" id="ENST00000267015.4">
    <property type="protein sequence ID" value="ENSP00000267015.3"/>
    <property type="RefSeq nucleotide sequence ID" value="NM_020370.3"/>
    <property type="RefSeq protein sequence ID" value="NP_065103.1"/>
</dbReference>
<dbReference type="UCSC" id="uc001sfu.4">
    <property type="organism name" value="human"/>
</dbReference>
<dbReference type="AGR" id="HGNC:4535"/>
<dbReference type="CTD" id="53831"/>
<dbReference type="DisGeNET" id="53831"/>
<dbReference type="GeneCards" id="GPR84"/>
<dbReference type="HGNC" id="HGNC:4535">
    <property type="gene designation" value="GPR84"/>
</dbReference>
<dbReference type="HPA" id="ENSG00000139572">
    <property type="expression patterns" value="Tissue enhanced (bone marrow, urinary bladder)"/>
</dbReference>
<dbReference type="MIM" id="606383">
    <property type="type" value="gene"/>
</dbReference>
<dbReference type="neXtProt" id="NX_Q9NQS5"/>
<dbReference type="OpenTargets" id="ENSG00000139572"/>
<dbReference type="PharmGKB" id="PA28928"/>
<dbReference type="VEuPathDB" id="HostDB:ENSG00000139572"/>
<dbReference type="eggNOG" id="KOG3656">
    <property type="taxonomic scope" value="Eukaryota"/>
</dbReference>
<dbReference type="GeneTree" id="ENSGT00940000161671"/>
<dbReference type="HOGENOM" id="CLU_009579_3_10_1"/>
<dbReference type="InParanoid" id="Q9NQS5"/>
<dbReference type="OMA" id="RRVTRMC"/>
<dbReference type="OrthoDB" id="6117944at2759"/>
<dbReference type="PAN-GO" id="Q9NQS5">
    <property type="GO annotations" value="3 GO annotations based on evolutionary models"/>
</dbReference>
<dbReference type="PhylomeDB" id="Q9NQS5"/>
<dbReference type="TreeFam" id="TF333474"/>
<dbReference type="PathwayCommons" id="Q9NQS5"/>
<dbReference type="Reactome" id="R-HSA-418555">
    <property type="pathway name" value="G alpha (s) signalling events"/>
</dbReference>
<dbReference type="Reactome" id="R-HSA-6798695">
    <property type="pathway name" value="Neutrophil degranulation"/>
</dbReference>
<dbReference type="SignaLink" id="Q9NQS5"/>
<dbReference type="SIGNOR" id="Q9NQS5"/>
<dbReference type="BioGRID-ORCS" id="53831">
    <property type="hits" value="14 hits in 1150 CRISPR screens"/>
</dbReference>
<dbReference type="GeneWiki" id="GPR84"/>
<dbReference type="GenomeRNAi" id="53831"/>
<dbReference type="Pharos" id="Q9NQS5">
    <property type="development level" value="Tchem"/>
</dbReference>
<dbReference type="PRO" id="PR:Q9NQS5"/>
<dbReference type="Proteomes" id="UP000005640">
    <property type="component" value="Chromosome 12"/>
</dbReference>
<dbReference type="RNAct" id="Q9NQS5">
    <property type="molecule type" value="protein"/>
</dbReference>
<dbReference type="Bgee" id="ENSG00000139572">
    <property type="expression patterns" value="Expressed in bone marrow and 98 other cell types or tissues"/>
</dbReference>
<dbReference type="GO" id="GO:0005886">
    <property type="term" value="C:plasma membrane"/>
    <property type="evidence" value="ECO:0000318"/>
    <property type="project" value="GO_Central"/>
</dbReference>
<dbReference type="GO" id="GO:0043235">
    <property type="term" value="C:receptor complex"/>
    <property type="evidence" value="ECO:0000314"/>
    <property type="project" value="MGI"/>
</dbReference>
<dbReference type="GO" id="GO:0035579">
    <property type="term" value="C:specific granule membrane"/>
    <property type="evidence" value="ECO:0000304"/>
    <property type="project" value="Reactome"/>
</dbReference>
<dbReference type="GO" id="GO:0070821">
    <property type="term" value="C:tertiary granule membrane"/>
    <property type="evidence" value="ECO:0000304"/>
    <property type="project" value="Reactome"/>
</dbReference>
<dbReference type="GO" id="GO:0001604">
    <property type="term" value="F:urotensin II receptor activity"/>
    <property type="evidence" value="ECO:0000318"/>
    <property type="project" value="GO_Central"/>
</dbReference>
<dbReference type="GO" id="GO:0007218">
    <property type="term" value="P:neuropeptide signaling pathway"/>
    <property type="evidence" value="ECO:0000318"/>
    <property type="project" value="GO_Central"/>
</dbReference>
<dbReference type="CDD" id="cd15210">
    <property type="entry name" value="7tmA_GPR84-like"/>
    <property type="match status" value="1"/>
</dbReference>
<dbReference type="Gene3D" id="1.20.1070.10">
    <property type="entry name" value="Rhodopsin 7-helix transmembrane proteins"/>
    <property type="match status" value="1"/>
</dbReference>
<dbReference type="InterPro" id="IPR000276">
    <property type="entry name" value="GPCR_Rhodpsn"/>
</dbReference>
<dbReference type="InterPro" id="IPR017452">
    <property type="entry name" value="GPCR_Rhodpsn_7TM"/>
</dbReference>
<dbReference type="PANTHER" id="PTHR24230">
    <property type="entry name" value="G-PROTEIN COUPLED RECEPTOR"/>
    <property type="match status" value="1"/>
</dbReference>
<dbReference type="PANTHER" id="PTHR24230:SF59">
    <property type="entry name" value="G-PROTEIN COUPLED RECEPTOR 84"/>
    <property type="match status" value="1"/>
</dbReference>
<dbReference type="Pfam" id="PF00001">
    <property type="entry name" value="7tm_1"/>
    <property type="match status" value="1"/>
</dbReference>
<dbReference type="PRINTS" id="PR00237">
    <property type="entry name" value="GPCRRHODOPSN"/>
</dbReference>
<dbReference type="SUPFAM" id="SSF81321">
    <property type="entry name" value="Family A G protein-coupled receptor-like"/>
    <property type="match status" value="1"/>
</dbReference>
<dbReference type="PROSITE" id="PS50262">
    <property type="entry name" value="G_PROTEIN_RECEP_F1_2"/>
    <property type="match status" value="1"/>
</dbReference>
<sequence length="396" mass="43705">MWNSSDANFSCYHESVLGYRYVAVSWGVVVAVTGTVGNVLTLLALAIQPKLRTRFNLLIANLTLADLLYCTLLQPFSVDTYLHLHWRTGATFCRVFGLLLFASNSVSILTLCLIALGRYLLIAHPKLFPQVFSAKGIVLALVSTWVVGVASFAPLWPIYILVPVVCTCSFDRIRGRPYTTILMGIYFVLGLSSVGIFYCLIHRQVKRAAQALDQYKLRQASIHSNHVARTDEAMPGRFQELDSRLASGGPSEGISSEPVSAATTQTLEGDSSEVGDQINSKRAKQMAEKSPPEASAKAQPIKGARRAPDSSSEFGKVTRMCFAVFLCFALSYIPFLLLNILDARVQAPRVVHMLAANLTWLNGCINPVLYAAMNRQFRQAYGSILKRGPRSFHRLH</sequence>
<organism>
    <name type="scientific">Homo sapiens</name>
    <name type="common">Human</name>
    <dbReference type="NCBI Taxonomy" id="9606"/>
    <lineage>
        <taxon>Eukaryota</taxon>
        <taxon>Metazoa</taxon>
        <taxon>Chordata</taxon>
        <taxon>Craniata</taxon>
        <taxon>Vertebrata</taxon>
        <taxon>Euteleostomi</taxon>
        <taxon>Mammalia</taxon>
        <taxon>Eutheria</taxon>
        <taxon>Euarchontoglires</taxon>
        <taxon>Primates</taxon>
        <taxon>Haplorrhini</taxon>
        <taxon>Catarrhini</taxon>
        <taxon>Hominidae</taxon>
        <taxon>Homo</taxon>
    </lineage>
</organism>
<name>GPR84_HUMAN</name>
<gene>
    <name type="primary">GPR84</name>
    <name type="synonym">EX33</name>
</gene>
<proteinExistence type="evidence at protein level"/>
<keyword id="KW-0002">3D-structure</keyword>
<keyword id="KW-1003">Cell membrane</keyword>
<keyword id="KW-0297">G-protein coupled receptor</keyword>
<keyword id="KW-0325">Glycoprotein</keyword>
<keyword id="KW-0472">Membrane</keyword>
<keyword id="KW-0597">Phosphoprotein</keyword>
<keyword id="KW-1267">Proteomics identification</keyword>
<keyword id="KW-0675">Receptor</keyword>
<keyword id="KW-1185">Reference proteome</keyword>
<keyword id="KW-0807">Transducer</keyword>
<keyword id="KW-0812">Transmembrane</keyword>
<keyword id="KW-1133">Transmembrane helix</keyword>
<protein>
    <recommendedName>
        <fullName>G-protein coupled receptor 84</fullName>
    </recommendedName>
    <alternativeName>
        <fullName>Inflammation-related G-protein coupled receptor EX33</fullName>
    </alternativeName>
</protein>